<dbReference type="EC" id="7.1.1.-" evidence="1"/>
<dbReference type="EMBL" id="CP000713">
    <property type="protein sequence ID" value="ABQ94639.1"/>
    <property type="molecule type" value="Genomic_DNA"/>
</dbReference>
<dbReference type="SMR" id="A5WG48"/>
<dbReference type="STRING" id="349106.PsycPRwf_1699"/>
<dbReference type="KEGG" id="prw:PsycPRwf_1699"/>
<dbReference type="eggNOG" id="COG0838">
    <property type="taxonomic scope" value="Bacteria"/>
</dbReference>
<dbReference type="HOGENOM" id="CLU_1486001_0_0_6"/>
<dbReference type="GO" id="GO:0030964">
    <property type="term" value="C:NADH dehydrogenase complex"/>
    <property type="evidence" value="ECO:0007669"/>
    <property type="project" value="TreeGrafter"/>
</dbReference>
<dbReference type="GO" id="GO:0005886">
    <property type="term" value="C:plasma membrane"/>
    <property type="evidence" value="ECO:0007669"/>
    <property type="project" value="UniProtKB-SubCell"/>
</dbReference>
<dbReference type="GO" id="GO:0008137">
    <property type="term" value="F:NADH dehydrogenase (ubiquinone) activity"/>
    <property type="evidence" value="ECO:0007669"/>
    <property type="project" value="InterPro"/>
</dbReference>
<dbReference type="GO" id="GO:0050136">
    <property type="term" value="F:NADH:ubiquinone reductase (non-electrogenic) activity"/>
    <property type="evidence" value="ECO:0007669"/>
    <property type="project" value="UniProtKB-UniRule"/>
</dbReference>
<dbReference type="GO" id="GO:0048038">
    <property type="term" value="F:quinone binding"/>
    <property type="evidence" value="ECO:0007669"/>
    <property type="project" value="UniProtKB-KW"/>
</dbReference>
<dbReference type="Gene3D" id="1.20.58.1610">
    <property type="entry name" value="NADH:ubiquinone/plastoquinone oxidoreductase, chain 3"/>
    <property type="match status" value="1"/>
</dbReference>
<dbReference type="HAMAP" id="MF_01394">
    <property type="entry name" value="NDH1_NuoA"/>
    <property type="match status" value="1"/>
</dbReference>
<dbReference type="InterPro" id="IPR023043">
    <property type="entry name" value="NAD(P)H_OxRDtase_bac/plastid"/>
</dbReference>
<dbReference type="InterPro" id="IPR000440">
    <property type="entry name" value="NADH_UbQ/plastoQ_OxRdtase_su3"/>
</dbReference>
<dbReference type="InterPro" id="IPR038430">
    <property type="entry name" value="NDAH_ubi_oxred_su3_sf"/>
</dbReference>
<dbReference type="PANTHER" id="PTHR11058:SF21">
    <property type="entry name" value="NADH-QUINONE OXIDOREDUCTASE SUBUNIT A"/>
    <property type="match status" value="1"/>
</dbReference>
<dbReference type="PANTHER" id="PTHR11058">
    <property type="entry name" value="NADH-UBIQUINONE OXIDOREDUCTASE CHAIN 3"/>
    <property type="match status" value="1"/>
</dbReference>
<dbReference type="Pfam" id="PF00507">
    <property type="entry name" value="Oxidored_q4"/>
    <property type="match status" value="1"/>
</dbReference>
<name>NUOA_PSYWF</name>
<feature type="chain" id="PRO_0000362750" description="NADH-quinone oxidoreductase subunit A">
    <location>
        <begin position="1"/>
        <end position="211"/>
    </location>
</feature>
<feature type="transmembrane region" description="Helical" evidence="1">
    <location>
        <begin position="7"/>
        <end position="27"/>
    </location>
</feature>
<feature type="transmembrane region" description="Helical" evidence="1">
    <location>
        <begin position="61"/>
        <end position="81"/>
    </location>
</feature>
<feature type="transmembrane region" description="Helical" evidence="1">
    <location>
        <begin position="88"/>
        <end position="108"/>
    </location>
</feature>
<accession>A5WG48</accession>
<protein>
    <recommendedName>
        <fullName evidence="1">NADH-quinone oxidoreductase subunit A</fullName>
        <ecNumber evidence="1">7.1.1.-</ecNumber>
    </recommendedName>
    <alternativeName>
        <fullName evidence="1">NADH dehydrogenase I subunit A</fullName>
    </alternativeName>
    <alternativeName>
        <fullName evidence="1">NDH-1 subunit A</fullName>
    </alternativeName>
    <alternativeName>
        <fullName evidence="1">NUO1</fullName>
    </alternativeName>
</protein>
<reference key="1">
    <citation type="submission" date="2007-05" db="EMBL/GenBank/DDBJ databases">
        <title>Complete sequence of chromosome of Psychrobacter sp. PRwf-1.</title>
        <authorList>
            <consortium name="US DOE Joint Genome Institute"/>
            <person name="Copeland A."/>
            <person name="Lucas S."/>
            <person name="Lapidus A."/>
            <person name="Barry K."/>
            <person name="Detter J.C."/>
            <person name="Glavina del Rio T."/>
            <person name="Hammon N."/>
            <person name="Israni S."/>
            <person name="Dalin E."/>
            <person name="Tice H."/>
            <person name="Pitluck S."/>
            <person name="Chain P."/>
            <person name="Malfatti S."/>
            <person name="Shin M."/>
            <person name="Vergez L."/>
            <person name="Schmutz J."/>
            <person name="Larimer F."/>
            <person name="Land M."/>
            <person name="Hauser L."/>
            <person name="Kyrpides N."/>
            <person name="Kim E."/>
            <person name="Tiedje J."/>
            <person name="Richardson P."/>
        </authorList>
    </citation>
    <scope>NUCLEOTIDE SEQUENCE [LARGE SCALE GENOMIC DNA]</scope>
    <source>
        <strain>PRwf-1</strain>
    </source>
</reference>
<comment type="function">
    <text evidence="1">NDH-1 shuttles electrons from NADH, via FMN and iron-sulfur (Fe-S) centers, to quinones in the respiratory chain. The immediate electron acceptor for the enzyme in this species is believed to be ubiquinone. Couples the redox reaction to proton translocation (for every two electrons transferred, four hydrogen ions are translocated across the cytoplasmic membrane), and thus conserves the redox energy in a proton gradient.</text>
</comment>
<comment type="catalytic activity">
    <reaction evidence="1">
        <text>a quinone + NADH + 5 H(+)(in) = a quinol + NAD(+) + 4 H(+)(out)</text>
        <dbReference type="Rhea" id="RHEA:57888"/>
        <dbReference type="ChEBI" id="CHEBI:15378"/>
        <dbReference type="ChEBI" id="CHEBI:24646"/>
        <dbReference type="ChEBI" id="CHEBI:57540"/>
        <dbReference type="ChEBI" id="CHEBI:57945"/>
        <dbReference type="ChEBI" id="CHEBI:132124"/>
    </reaction>
</comment>
<comment type="subunit">
    <text evidence="1">NDH-1 is composed of 14 different subunits. Subunits NuoA, H, J, K, L, M, N constitute the membrane sector of the complex.</text>
</comment>
<comment type="subcellular location">
    <subcellularLocation>
        <location evidence="1">Cell inner membrane</location>
        <topology evidence="1">Multi-pass membrane protein</topology>
    </subcellularLocation>
</comment>
<comment type="similarity">
    <text evidence="1">Belongs to the complex I subunit 3 family.</text>
</comment>
<organism>
    <name type="scientific">Psychrobacter sp. (strain PRwf-1)</name>
    <dbReference type="NCBI Taxonomy" id="349106"/>
    <lineage>
        <taxon>Bacteria</taxon>
        <taxon>Pseudomonadati</taxon>
        <taxon>Pseudomonadota</taxon>
        <taxon>Gammaproteobacteria</taxon>
        <taxon>Moraxellales</taxon>
        <taxon>Moraxellaceae</taxon>
        <taxon>Psychrobacter</taxon>
    </lineage>
</organism>
<gene>
    <name evidence="1" type="primary">nuoA</name>
    <name type="ordered locus">PsycPRwf_1699</name>
</gene>
<keyword id="KW-0997">Cell inner membrane</keyword>
<keyword id="KW-1003">Cell membrane</keyword>
<keyword id="KW-0472">Membrane</keyword>
<keyword id="KW-0520">NAD</keyword>
<keyword id="KW-0874">Quinone</keyword>
<keyword id="KW-1278">Translocase</keyword>
<keyword id="KW-0812">Transmembrane</keyword>
<keyword id="KW-1133">Transmembrane helix</keyword>
<keyword id="KW-0813">Transport</keyword>
<keyword id="KW-0830">Ubiquinone</keyword>
<sequence length="211" mass="22780">MTSAFNWSALAFILAAIGLVIFMLVVPRLLGGRSQGTEKEEVFESGVVGAGNARIRLSAKFYLVAIFFVIFDLEALYLYAYSVSVREVGWIGYATALIFVVDLLIGLIYALSLGALNWAPADKRRKKERLSAAPAGFNLASITKFNGIDELHTDPTGKVPAQSSGQVNVSNDIEANKRHLANIDRINVTGNVTSVDFSTQSTNSLSNKSSS</sequence>
<evidence type="ECO:0000255" key="1">
    <source>
        <dbReference type="HAMAP-Rule" id="MF_01394"/>
    </source>
</evidence>
<proteinExistence type="inferred from homology"/>